<proteinExistence type="inferred from homology"/>
<reference key="1">
    <citation type="submission" date="2006-03" db="EMBL/GenBank/DDBJ databases">
        <title>Complete sequence of Methylobacillus flagellatus KT.</title>
        <authorList>
            <consortium name="US DOE Joint Genome Institute"/>
            <person name="Copeland A."/>
            <person name="Lucas S."/>
            <person name="Lapidus A."/>
            <person name="Barry K."/>
            <person name="Detter J.C."/>
            <person name="Glavina del Rio T."/>
            <person name="Hammon N."/>
            <person name="Israni S."/>
            <person name="Dalin E."/>
            <person name="Tice H."/>
            <person name="Pitluck S."/>
            <person name="Brettin T."/>
            <person name="Bruce D."/>
            <person name="Han C."/>
            <person name="Tapia R."/>
            <person name="Saunders E."/>
            <person name="Gilna P."/>
            <person name="Schmutz J."/>
            <person name="Larimer F."/>
            <person name="Land M."/>
            <person name="Kyrpides N."/>
            <person name="Anderson I."/>
            <person name="Richardson P."/>
        </authorList>
    </citation>
    <scope>NUCLEOTIDE SEQUENCE [LARGE SCALE GENOMIC DNA]</scope>
    <source>
        <strain>ATCC 51484 / DSM 6875 / VKM B-1610 / KT</strain>
    </source>
</reference>
<dbReference type="EC" id="2.1.1.170" evidence="1"/>
<dbReference type="EMBL" id="CP000284">
    <property type="protein sequence ID" value="ABE51017.1"/>
    <property type="molecule type" value="Genomic_DNA"/>
</dbReference>
<dbReference type="SMR" id="Q1GXM0"/>
<dbReference type="STRING" id="265072.Mfla_2754"/>
<dbReference type="KEGG" id="mfa:Mfla_2754"/>
<dbReference type="eggNOG" id="COG0357">
    <property type="taxonomic scope" value="Bacteria"/>
</dbReference>
<dbReference type="HOGENOM" id="CLU_065341_2_2_4"/>
<dbReference type="Proteomes" id="UP000002440">
    <property type="component" value="Chromosome"/>
</dbReference>
<dbReference type="GO" id="GO:0005829">
    <property type="term" value="C:cytosol"/>
    <property type="evidence" value="ECO:0007669"/>
    <property type="project" value="TreeGrafter"/>
</dbReference>
<dbReference type="GO" id="GO:0070043">
    <property type="term" value="F:rRNA (guanine-N7-)-methyltransferase activity"/>
    <property type="evidence" value="ECO:0007669"/>
    <property type="project" value="UniProtKB-UniRule"/>
</dbReference>
<dbReference type="CDD" id="cd02440">
    <property type="entry name" value="AdoMet_MTases"/>
    <property type="match status" value="1"/>
</dbReference>
<dbReference type="Gene3D" id="3.40.50.150">
    <property type="entry name" value="Vaccinia Virus protein VP39"/>
    <property type="match status" value="1"/>
</dbReference>
<dbReference type="HAMAP" id="MF_00074">
    <property type="entry name" value="16SrRNA_methyltr_G"/>
    <property type="match status" value="1"/>
</dbReference>
<dbReference type="InterPro" id="IPR003682">
    <property type="entry name" value="rRNA_ssu_MeTfrase_G"/>
</dbReference>
<dbReference type="InterPro" id="IPR029063">
    <property type="entry name" value="SAM-dependent_MTases_sf"/>
</dbReference>
<dbReference type="NCBIfam" id="TIGR00138">
    <property type="entry name" value="rsmG_gidB"/>
    <property type="match status" value="1"/>
</dbReference>
<dbReference type="PANTHER" id="PTHR31760">
    <property type="entry name" value="S-ADENOSYL-L-METHIONINE-DEPENDENT METHYLTRANSFERASES SUPERFAMILY PROTEIN"/>
    <property type="match status" value="1"/>
</dbReference>
<dbReference type="PANTHER" id="PTHR31760:SF0">
    <property type="entry name" value="S-ADENOSYL-L-METHIONINE-DEPENDENT METHYLTRANSFERASES SUPERFAMILY PROTEIN"/>
    <property type="match status" value="1"/>
</dbReference>
<dbReference type="Pfam" id="PF02527">
    <property type="entry name" value="GidB"/>
    <property type="match status" value="1"/>
</dbReference>
<dbReference type="PIRSF" id="PIRSF003078">
    <property type="entry name" value="GidB"/>
    <property type="match status" value="1"/>
</dbReference>
<dbReference type="SUPFAM" id="SSF53335">
    <property type="entry name" value="S-adenosyl-L-methionine-dependent methyltransferases"/>
    <property type="match status" value="1"/>
</dbReference>
<organism>
    <name type="scientific">Methylobacillus flagellatus (strain ATCC 51484 / DSM 6875 / VKM B-1610 / KT)</name>
    <dbReference type="NCBI Taxonomy" id="265072"/>
    <lineage>
        <taxon>Bacteria</taxon>
        <taxon>Pseudomonadati</taxon>
        <taxon>Pseudomonadota</taxon>
        <taxon>Betaproteobacteria</taxon>
        <taxon>Nitrosomonadales</taxon>
        <taxon>Methylophilaceae</taxon>
        <taxon>Methylobacillus</taxon>
    </lineage>
</organism>
<comment type="function">
    <text evidence="1">Specifically methylates the N7 position of guanine in position 527 of 16S rRNA.</text>
</comment>
<comment type="catalytic activity">
    <reaction evidence="1">
        <text>guanosine(527) in 16S rRNA + S-adenosyl-L-methionine = N(7)-methylguanosine(527) in 16S rRNA + S-adenosyl-L-homocysteine</text>
        <dbReference type="Rhea" id="RHEA:42732"/>
        <dbReference type="Rhea" id="RHEA-COMP:10209"/>
        <dbReference type="Rhea" id="RHEA-COMP:10210"/>
        <dbReference type="ChEBI" id="CHEBI:57856"/>
        <dbReference type="ChEBI" id="CHEBI:59789"/>
        <dbReference type="ChEBI" id="CHEBI:74269"/>
        <dbReference type="ChEBI" id="CHEBI:74480"/>
        <dbReference type="EC" id="2.1.1.170"/>
    </reaction>
</comment>
<comment type="subcellular location">
    <subcellularLocation>
        <location evidence="1">Cytoplasm</location>
    </subcellularLocation>
</comment>
<comment type="similarity">
    <text evidence="1">Belongs to the methyltransferase superfamily. RNA methyltransferase RsmG family.</text>
</comment>
<evidence type="ECO:0000255" key="1">
    <source>
        <dbReference type="HAMAP-Rule" id="MF_00074"/>
    </source>
</evidence>
<gene>
    <name evidence="1" type="primary">rsmG</name>
    <name type="ordered locus">Mfla_2754</name>
</gene>
<accession>Q1GXM0</accession>
<protein>
    <recommendedName>
        <fullName evidence="1">Ribosomal RNA small subunit methyltransferase G</fullName>
        <ecNumber evidence="1">2.1.1.170</ecNumber>
    </recommendedName>
    <alternativeName>
        <fullName evidence="1">16S rRNA 7-methylguanosine methyltransferase</fullName>
        <shortName evidence="1">16S rRNA m7G methyltransferase</shortName>
    </alternativeName>
</protein>
<keyword id="KW-0963">Cytoplasm</keyword>
<keyword id="KW-0489">Methyltransferase</keyword>
<keyword id="KW-1185">Reference proteome</keyword>
<keyword id="KW-0698">rRNA processing</keyword>
<keyword id="KW-0949">S-adenosyl-L-methionine</keyword>
<keyword id="KW-0808">Transferase</keyword>
<feature type="chain" id="PRO_0000335371" description="Ribosomal RNA small subunit methyltransferase G">
    <location>
        <begin position="1"/>
        <end position="205"/>
    </location>
</feature>
<feature type="binding site" evidence="1">
    <location>
        <position position="73"/>
    </location>
    <ligand>
        <name>S-adenosyl-L-methionine</name>
        <dbReference type="ChEBI" id="CHEBI:59789"/>
    </ligand>
</feature>
<feature type="binding site" evidence="1">
    <location>
        <position position="78"/>
    </location>
    <ligand>
        <name>S-adenosyl-L-methionine</name>
        <dbReference type="ChEBI" id="CHEBI:59789"/>
    </ligand>
</feature>
<feature type="binding site" evidence="1">
    <location>
        <begin position="124"/>
        <end position="125"/>
    </location>
    <ligand>
        <name>S-adenosyl-L-methionine</name>
        <dbReference type="ChEBI" id="CHEBI:59789"/>
    </ligand>
</feature>
<feature type="binding site" evidence="1">
    <location>
        <position position="139"/>
    </location>
    <ligand>
        <name>S-adenosyl-L-methionine</name>
        <dbReference type="ChEBI" id="CHEBI:59789"/>
    </ligand>
</feature>
<name>RSMG_METFK</name>
<sequence>MQQKLETGIRQLGLDLPAEVTEKLLAYLALLAKWNKVHNLTAVRDPEDMVTLHLLDSLSVLPHVPSGSLLDVGSGAGLPGIVLAICRPDLQVTTIDAVQKKASFMRQAKAELQIDNLQVVAGRVEQFEPEAPFDTVISRAFSEIALFVKLTRHLMAEDGLWLAMKGQMPQEELGAVALKPAKIMSLIVPGLDAQRHLVFLPARQF</sequence>